<dbReference type="EC" id="5.4.2.11" evidence="1"/>
<dbReference type="EMBL" id="AE017262">
    <property type="protein sequence ID" value="AAT05005.1"/>
    <property type="molecule type" value="Genomic_DNA"/>
</dbReference>
<dbReference type="RefSeq" id="WP_003726238.1">
    <property type="nucleotide sequence ID" value="NC_002973.6"/>
</dbReference>
<dbReference type="SMR" id="Q71XG0"/>
<dbReference type="KEGG" id="lmf:LMOf2365_2238"/>
<dbReference type="HOGENOM" id="CLU_033323_1_1_9"/>
<dbReference type="UniPathway" id="UPA00109">
    <property type="reaction ID" value="UER00186"/>
</dbReference>
<dbReference type="GO" id="GO:0004619">
    <property type="term" value="F:phosphoglycerate mutase activity"/>
    <property type="evidence" value="ECO:0007669"/>
    <property type="project" value="UniProtKB-EC"/>
</dbReference>
<dbReference type="GO" id="GO:0006094">
    <property type="term" value="P:gluconeogenesis"/>
    <property type="evidence" value="ECO:0007669"/>
    <property type="project" value="UniProtKB-UniRule"/>
</dbReference>
<dbReference type="GO" id="GO:0006096">
    <property type="term" value="P:glycolytic process"/>
    <property type="evidence" value="ECO:0007669"/>
    <property type="project" value="UniProtKB-UniRule"/>
</dbReference>
<dbReference type="CDD" id="cd07067">
    <property type="entry name" value="HP_PGM_like"/>
    <property type="match status" value="1"/>
</dbReference>
<dbReference type="FunFam" id="3.40.50.1240:FF:000003">
    <property type="entry name" value="2,3-bisphosphoglycerate-dependent phosphoglycerate mutase"/>
    <property type="match status" value="1"/>
</dbReference>
<dbReference type="Gene3D" id="3.40.50.1240">
    <property type="entry name" value="Phosphoglycerate mutase-like"/>
    <property type="match status" value="1"/>
</dbReference>
<dbReference type="HAMAP" id="MF_01039">
    <property type="entry name" value="PGAM_GpmA"/>
    <property type="match status" value="1"/>
</dbReference>
<dbReference type="InterPro" id="IPR013078">
    <property type="entry name" value="His_Pase_superF_clade-1"/>
</dbReference>
<dbReference type="InterPro" id="IPR029033">
    <property type="entry name" value="His_PPase_superfam"/>
</dbReference>
<dbReference type="InterPro" id="IPR001345">
    <property type="entry name" value="PG/BPGM_mutase_AS"/>
</dbReference>
<dbReference type="InterPro" id="IPR005952">
    <property type="entry name" value="Phosphogly_mut1"/>
</dbReference>
<dbReference type="NCBIfam" id="TIGR01258">
    <property type="entry name" value="pgm_1"/>
    <property type="match status" value="1"/>
</dbReference>
<dbReference type="NCBIfam" id="NF010713">
    <property type="entry name" value="PRK14115.1"/>
    <property type="match status" value="1"/>
</dbReference>
<dbReference type="PANTHER" id="PTHR11931">
    <property type="entry name" value="PHOSPHOGLYCERATE MUTASE"/>
    <property type="match status" value="1"/>
</dbReference>
<dbReference type="Pfam" id="PF00300">
    <property type="entry name" value="His_Phos_1"/>
    <property type="match status" value="2"/>
</dbReference>
<dbReference type="PIRSF" id="PIRSF000709">
    <property type="entry name" value="6PFK_2-Ptase"/>
    <property type="match status" value="1"/>
</dbReference>
<dbReference type="SMART" id="SM00855">
    <property type="entry name" value="PGAM"/>
    <property type="match status" value="1"/>
</dbReference>
<dbReference type="SUPFAM" id="SSF53254">
    <property type="entry name" value="Phosphoglycerate mutase-like"/>
    <property type="match status" value="1"/>
</dbReference>
<dbReference type="PROSITE" id="PS00175">
    <property type="entry name" value="PG_MUTASE"/>
    <property type="match status" value="1"/>
</dbReference>
<evidence type="ECO:0000255" key="1">
    <source>
        <dbReference type="HAMAP-Rule" id="MF_01039"/>
    </source>
</evidence>
<proteinExistence type="inferred from homology"/>
<feature type="chain" id="PRO_0000179889" description="2,3-bisphosphoglycerate-dependent phosphoglycerate mutase">
    <location>
        <begin position="1"/>
        <end position="229"/>
    </location>
</feature>
<feature type="active site" description="Tele-phosphohistidine intermediate" evidence="1">
    <location>
        <position position="8"/>
    </location>
</feature>
<feature type="active site" description="Proton donor/acceptor" evidence="1">
    <location>
        <position position="86"/>
    </location>
</feature>
<feature type="binding site" evidence="1">
    <location>
        <begin position="7"/>
        <end position="14"/>
    </location>
    <ligand>
        <name>substrate</name>
    </ligand>
</feature>
<feature type="binding site" evidence="1">
    <location>
        <begin position="20"/>
        <end position="21"/>
    </location>
    <ligand>
        <name>substrate</name>
    </ligand>
</feature>
<feature type="binding site" evidence="1">
    <location>
        <position position="59"/>
    </location>
    <ligand>
        <name>substrate</name>
    </ligand>
</feature>
<feature type="binding site" evidence="1">
    <location>
        <begin position="86"/>
        <end position="89"/>
    </location>
    <ligand>
        <name>substrate</name>
    </ligand>
</feature>
<feature type="binding site" evidence="1">
    <location>
        <position position="97"/>
    </location>
    <ligand>
        <name>substrate</name>
    </ligand>
</feature>
<feature type="binding site" evidence="1">
    <location>
        <begin position="113"/>
        <end position="114"/>
    </location>
    <ligand>
        <name>substrate</name>
    </ligand>
</feature>
<feature type="binding site" evidence="1">
    <location>
        <begin position="182"/>
        <end position="183"/>
    </location>
    <ligand>
        <name>substrate</name>
    </ligand>
</feature>
<feature type="site" description="Transition state stabilizer" evidence="1">
    <location>
        <position position="181"/>
    </location>
</feature>
<sequence>MKLVLIRHGQSEWNKLNLFTGWHDVDLSQEGVVEAMTAGKRIKEAGLEFDVAFTSVLTRAIKTLNYVLEESDQMWVPVHKSWRLNERHYGALQGLNKQETAEKYGADQVQKWRRSYDTLPPLLEENDERQAKNDRRYQLLDTHAIPAGENLKVTLERVIPYWMDTIAPEIKEGRRVVIAAHGNSLRALVKFLEGIGDDEIMDLEIPTGVPLVYELNDDLKPVNKYYLDK</sequence>
<name>GPMA_LISMF</name>
<keyword id="KW-0312">Gluconeogenesis</keyword>
<keyword id="KW-0324">Glycolysis</keyword>
<keyword id="KW-0413">Isomerase</keyword>
<protein>
    <recommendedName>
        <fullName evidence="1">2,3-bisphosphoglycerate-dependent phosphoglycerate mutase</fullName>
        <shortName evidence="1">BPG-dependent PGAM</shortName>
        <shortName evidence="1">PGAM</shortName>
        <shortName evidence="1">Phosphoglyceromutase</shortName>
        <shortName evidence="1">dPGM</shortName>
        <ecNumber evidence="1">5.4.2.11</ecNumber>
    </recommendedName>
</protein>
<reference key="1">
    <citation type="journal article" date="2004" name="Nucleic Acids Res.">
        <title>Whole genome comparisons of serotype 4b and 1/2a strains of the food-borne pathogen Listeria monocytogenes reveal new insights into the core genome components of this species.</title>
        <authorList>
            <person name="Nelson K.E."/>
            <person name="Fouts D.E."/>
            <person name="Mongodin E.F."/>
            <person name="Ravel J."/>
            <person name="DeBoy R.T."/>
            <person name="Kolonay J.F."/>
            <person name="Rasko D.A."/>
            <person name="Angiuoli S.V."/>
            <person name="Gill S.R."/>
            <person name="Paulsen I.T."/>
            <person name="Peterson J.D."/>
            <person name="White O."/>
            <person name="Nelson W.C."/>
            <person name="Nierman W.C."/>
            <person name="Beanan M.J."/>
            <person name="Brinkac L.M."/>
            <person name="Daugherty S.C."/>
            <person name="Dodson R.J."/>
            <person name="Durkin A.S."/>
            <person name="Madupu R."/>
            <person name="Haft D.H."/>
            <person name="Selengut J."/>
            <person name="Van Aken S.E."/>
            <person name="Khouri H.M."/>
            <person name="Fedorova N."/>
            <person name="Forberger H.A."/>
            <person name="Tran B."/>
            <person name="Kathariou S."/>
            <person name="Wonderling L.D."/>
            <person name="Uhlich G.A."/>
            <person name="Bayles D.O."/>
            <person name="Luchansky J.B."/>
            <person name="Fraser C.M."/>
        </authorList>
    </citation>
    <scope>NUCLEOTIDE SEQUENCE [LARGE SCALE GENOMIC DNA]</scope>
    <source>
        <strain>F2365</strain>
    </source>
</reference>
<comment type="function">
    <text evidence="1">Catalyzes the interconversion of 2-phosphoglycerate and 3-phosphoglycerate.</text>
</comment>
<comment type="catalytic activity">
    <reaction evidence="1">
        <text>(2R)-2-phosphoglycerate = (2R)-3-phosphoglycerate</text>
        <dbReference type="Rhea" id="RHEA:15901"/>
        <dbReference type="ChEBI" id="CHEBI:58272"/>
        <dbReference type="ChEBI" id="CHEBI:58289"/>
        <dbReference type="EC" id="5.4.2.11"/>
    </reaction>
</comment>
<comment type="pathway">
    <text evidence="1">Carbohydrate degradation; glycolysis; pyruvate from D-glyceraldehyde 3-phosphate: step 3/5.</text>
</comment>
<comment type="similarity">
    <text evidence="1">Belongs to the phosphoglycerate mutase family. BPG-dependent PGAM subfamily.</text>
</comment>
<gene>
    <name evidence="1" type="primary">gpmA</name>
    <name type="synonym">gpm</name>
    <name type="ordered locus">LMOf2365_2238</name>
</gene>
<accession>Q71XG0</accession>
<organism>
    <name type="scientific">Listeria monocytogenes serotype 4b (strain F2365)</name>
    <dbReference type="NCBI Taxonomy" id="265669"/>
    <lineage>
        <taxon>Bacteria</taxon>
        <taxon>Bacillati</taxon>
        <taxon>Bacillota</taxon>
        <taxon>Bacilli</taxon>
        <taxon>Bacillales</taxon>
        <taxon>Listeriaceae</taxon>
        <taxon>Listeria</taxon>
    </lineage>
</organism>